<dbReference type="EMBL" id="Z49295">
    <property type="status" value="NOT_ANNOTATED_CDS"/>
    <property type="molecule type" value="Genomic_DNA"/>
</dbReference>
<dbReference type="EMBL" id="AF479958">
    <property type="protein sequence ID" value="AAL79271.1"/>
    <property type="molecule type" value="Genomic_DNA"/>
</dbReference>
<dbReference type="PaxDb" id="4932-YJL020W-A"/>
<dbReference type="EnsemblFungi" id="YJL020W-A_mRNA">
    <property type="protein sequence ID" value="YJL020W-A"/>
    <property type="gene ID" value="YJL020W-A"/>
</dbReference>
<dbReference type="AGR" id="SGD:S000028659"/>
<dbReference type="SGD" id="S000028659">
    <property type="gene designation" value="YJL020W-A"/>
</dbReference>
<dbReference type="HOGENOM" id="CLU_2514376_0_0_1"/>
<feature type="chain" id="PRO_0000299764" description="Putative uncharacterized protein YJL020W-A">
    <location>
        <begin position="1"/>
        <end position="85"/>
    </location>
</feature>
<proteinExistence type="uncertain"/>
<gene>
    <name type="ordered locus">YJL020W-A</name>
</gene>
<accession>Q8TGN2</accession>
<organism>
    <name type="scientific">Saccharomyces cerevisiae (strain ATCC 204508 / S288c)</name>
    <name type="common">Baker's yeast</name>
    <dbReference type="NCBI Taxonomy" id="559292"/>
    <lineage>
        <taxon>Eukaryota</taxon>
        <taxon>Fungi</taxon>
        <taxon>Dikarya</taxon>
        <taxon>Ascomycota</taxon>
        <taxon>Saccharomycotina</taxon>
        <taxon>Saccharomycetes</taxon>
        <taxon>Saccharomycetales</taxon>
        <taxon>Saccharomycetaceae</taxon>
        <taxon>Saccharomyces</taxon>
    </lineage>
</organism>
<comment type="miscellaneous">
    <text evidence="1">Completely overlaps BBC1.</text>
</comment>
<comment type="caution">
    <text evidence="2">Product of a dubious gene prediction unlikely to encode a functional protein. Because of that it is not part of the S.cerevisiae S288c complete/reference proteome set.</text>
</comment>
<reference key="1">
    <citation type="journal article" date="1996" name="EMBO J.">
        <title>Complete nucleotide sequence of Saccharomyces cerevisiae chromosome X.</title>
        <authorList>
            <person name="Galibert F."/>
            <person name="Alexandraki D."/>
            <person name="Baur A."/>
            <person name="Boles E."/>
            <person name="Chalwatzis N."/>
            <person name="Chuat J.-C."/>
            <person name="Coster F."/>
            <person name="Cziepluch C."/>
            <person name="de Haan M."/>
            <person name="Domdey H."/>
            <person name="Durand P."/>
            <person name="Entian K.-D."/>
            <person name="Gatius M."/>
            <person name="Goffeau A."/>
            <person name="Grivell L.A."/>
            <person name="Hennemann A."/>
            <person name="Herbert C.J."/>
            <person name="Heumann K."/>
            <person name="Hilger F."/>
            <person name="Hollenberg C.P."/>
            <person name="Huang M.-E."/>
            <person name="Jacq C."/>
            <person name="Jauniaux J.-C."/>
            <person name="Katsoulou C."/>
            <person name="Kirchrath L."/>
            <person name="Kleine K."/>
            <person name="Kordes E."/>
            <person name="Koetter P."/>
            <person name="Liebl S."/>
            <person name="Louis E.J."/>
            <person name="Manus V."/>
            <person name="Mewes H.-W."/>
            <person name="Miosga T."/>
            <person name="Obermaier B."/>
            <person name="Perea J."/>
            <person name="Pohl T.M."/>
            <person name="Portetelle D."/>
            <person name="Pujol A."/>
            <person name="Purnelle B."/>
            <person name="Ramezani Rad M."/>
            <person name="Rasmussen S.W."/>
            <person name="Rose M."/>
            <person name="Rossau R."/>
            <person name="Schaaff-Gerstenschlaeger I."/>
            <person name="Smits P.H.M."/>
            <person name="Scarcez T."/>
            <person name="Soriano N."/>
            <person name="To Van D."/>
            <person name="Tzermia M."/>
            <person name="Van Broekhoven A."/>
            <person name="Vandenbol M."/>
            <person name="Wedler H."/>
            <person name="von Wettstein D."/>
            <person name="Wambutt R."/>
            <person name="Zagulski M."/>
            <person name="Zollner A."/>
            <person name="Karpfinger-Hartl L."/>
        </authorList>
    </citation>
    <scope>NUCLEOTIDE SEQUENCE [LARGE SCALE GENOMIC DNA]</scope>
    <source>
        <strain>ATCC 204508 / S288c</strain>
    </source>
</reference>
<reference key="2">
    <citation type="journal article" date="2014" name="G3 (Bethesda)">
        <title>The reference genome sequence of Saccharomyces cerevisiae: Then and now.</title>
        <authorList>
            <person name="Engel S.R."/>
            <person name="Dietrich F.S."/>
            <person name="Fisk D.G."/>
            <person name="Binkley G."/>
            <person name="Balakrishnan R."/>
            <person name="Costanzo M.C."/>
            <person name="Dwight S.S."/>
            <person name="Hitz B.C."/>
            <person name="Karra K."/>
            <person name="Nash R.S."/>
            <person name="Weng S."/>
            <person name="Wong E.D."/>
            <person name="Lloyd P."/>
            <person name="Skrzypek M.S."/>
            <person name="Miyasato S.R."/>
            <person name="Simison M."/>
            <person name="Cherry J.M."/>
        </authorList>
    </citation>
    <scope>GENOME REANNOTATION</scope>
    <source>
        <strain>ATCC 204508 / S288c</strain>
    </source>
</reference>
<reference key="3">
    <citation type="journal article" date="2002" name="Nat. Biotechnol.">
        <title>An integrated approach for finding overlooked genes in yeast.</title>
        <authorList>
            <person name="Kumar A."/>
            <person name="Harrison P.M."/>
            <person name="Cheung K.-H."/>
            <person name="Lan N."/>
            <person name="Echols N."/>
            <person name="Bertone P."/>
            <person name="Miller P."/>
            <person name="Gerstein M.B."/>
            <person name="Snyder M."/>
        </authorList>
    </citation>
    <scope>NUCLEOTIDE SEQUENCE [GENOMIC DNA]</scope>
</reference>
<sequence>MARGSSWSCSGSSSSFSLCCFFFGSSDGLFPTPEAIPKGLKPTGAPNLLAPDSLAILSLNAALRFSSLSSSSFSSSLSPSLSSWP</sequence>
<protein>
    <recommendedName>
        <fullName>Putative uncharacterized protein YJL020W-A</fullName>
    </recommendedName>
</protein>
<name>YJ020_YEAST</name>
<evidence type="ECO:0000305" key="1"/>
<evidence type="ECO:0000305" key="2">
    <source>
    </source>
</evidence>